<evidence type="ECO:0000255" key="1">
    <source>
        <dbReference type="HAMAP-Rule" id="MF_00530"/>
    </source>
</evidence>
<keyword id="KW-0066">ATP synthesis</keyword>
<keyword id="KW-0997">Cell inner membrane</keyword>
<keyword id="KW-1003">Cell membrane</keyword>
<keyword id="KW-0139">CF(1)</keyword>
<keyword id="KW-0375">Hydrogen ion transport</keyword>
<keyword id="KW-0406">Ion transport</keyword>
<keyword id="KW-0472">Membrane</keyword>
<keyword id="KW-0813">Transport</keyword>
<comment type="function">
    <text evidence="1">Produces ATP from ADP in the presence of a proton gradient across the membrane.</text>
</comment>
<comment type="subunit">
    <text evidence="1">F-type ATPases have 2 components, CF(1) - the catalytic core - and CF(0) - the membrane proton channel. CF(1) has five subunits: alpha(3), beta(3), gamma(1), delta(1), epsilon(1). CF(0) has three main subunits: a, b and c.</text>
</comment>
<comment type="subcellular location">
    <subcellularLocation>
        <location evidence="1">Cell inner membrane</location>
        <topology evidence="1">Peripheral membrane protein</topology>
    </subcellularLocation>
</comment>
<comment type="similarity">
    <text evidence="1">Belongs to the ATPase epsilon chain family.</text>
</comment>
<accession>B1LBB8</accession>
<name>ATPE_THESQ</name>
<organism>
    <name type="scientific">Thermotoga sp. (strain RQ2)</name>
    <dbReference type="NCBI Taxonomy" id="126740"/>
    <lineage>
        <taxon>Bacteria</taxon>
        <taxon>Thermotogati</taxon>
        <taxon>Thermotogota</taxon>
        <taxon>Thermotogae</taxon>
        <taxon>Thermotogales</taxon>
        <taxon>Thermotogaceae</taxon>
        <taxon>Thermotoga</taxon>
    </lineage>
</organism>
<gene>
    <name evidence="1" type="primary">atpC</name>
    <name type="ordered locus">TRQ2_1272</name>
</gene>
<sequence length="108" mass="12329">MKVKIVTPYGIVYDRESDFISFRTVEGSMGILPRRAPIVTQLSVCDVKIKSGDDEYHLKVAGGFLLCDGKDVIIITEEAGREEDISPDRFMEARERVERVRRFFQSSL</sequence>
<protein>
    <recommendedName>
        <fullName evidence="1">ATP synthase epsilon chain</fullName>
    </recommendedName>
    <alternativeName>
        <fullName evidence="1">ATP synthase F1 sector epsilon subunit</fullName>
    </alternativeName>
    <alternativeName>
        <fullName evidence="1">F-ATPase epsilon subunit</fullName>
    </alternativeName>
</protein>
<feature type="chain" id="PRO_1000127903" description="ATP synthase epsilon chain">
    <location>
        <begin position="1"/>
        <end position="108"/>
    </location>
</feature>
<proteinExistence type="inferred from homology"/>
<reference key="1">
    <citation type="journal article" date="2011" name="J. Bacteriol.">
        <title>Genome sequence of Thermotoga sp. strain RQ2, a hyperthermophilic bacterium isolated from a geothermally heated region of the seafloor near Ribeira Quente, the Azores.</title>
        <authorList>
            <person name="Swithers K.S."/>
            <person name="DiPippo J.L."/>
            <person name="Bruce D.C."/>
            <person name="Detter C."/>
            <person name="Tapia R."/>
            <person name="Han S."/>
            <person name="Saunders E."/>
            <person name="Goodwin L.A."/>
            <person name="Han J."/>
            <person name="Woyke T."/>
            <person name="Pitluck S."/>
            <person name="Pennacchio L."/>
            <person name="Nolan M."/>
            <person name="Mikhailova N."/>
            <person name="Lykidis A."/>
            <person name="Land M.L."/>
            <person name="Brettin T."/>
            <person name="Stetter K.O."/>
            <person name="Nelson K.E."/>
            <person name="Gogarten J.P."/>
            <person name="Noll K.M."/>
        </authorList>
    </citation>
    <scope>NUCLEOTIDE SEQUENCE [LARGE SCALE GENOMIC DNA]</scope>
    <source>
        <strain>RQ2</strain>
    </source>
</reference>
<dbReference type="EMBL" id="CP000969">
    <property type="protein sequence ID" value="ACB09616.1"/>
    <property type="molecule type" value="Genomic_DNA"/>
</dbReference>
<dbReference type="RefSeq" id="WP_004082057.1">
    <property type="nucleotide sequence ID" value="NC_010483.1"/>
</dbReference>
<dbReference type="SMR" id="B1LBB8"/>
<dbReference type="KEGG" id="trq:TRQ2_1272"/>
<dbReference type="HOGENOM" id="CLU_084338_1_0_0"/>
<dbReference type="Proteomes" id="UP000001687">
    <property type="component" value="Chromosome"/>
</dbReference>
<dbReference type="GO" id="GO:0005886">
    <property type="term" value="C:plasma membrane"/>
    <property type="evidence" value="ECO:0007669"/>
    <property type="project" value="UniProtKB-SubCell"/>
</dbReference>
<dbReference type="GO" id="GO:0045259">
    <property type="term" value="C:proton-transporting ATP synthase complex"/>
    <property type="evidence" value="ECO:0007669"/>
    <property type="project" value="UniProtKB-KW"/>
</dbReference>
<dbReference type="GO" id="GO:0005524">
    <property type="term" value="F:ATP binding"/>
    <property type="evidence" value="ECO:0007669"/>
    <property type="project" value="UniProtKB-UniRule"/>
</dbReference>
<dbReference type="GO" id="GO:0046933">
    <property type="term" value="F:proton-transporting ATP synthase activity, rotational mechanism"/>
    <property type="evidence" value="ECO:0007669"/>
    <property type="project" value="UniProtKB-UniRule"/>
</dbReference>
<dbReference type="CDD" id="cd12152">
    <property type="entry name" value="F1-ATPase_delta"/>
    <property type="match status" value="1"/>
</dbReference>
<dbReference type="Gene3D" id="2.60.15.10">
    <property type="entry name" value="F0F1 ATP synthase delta/epsilon subunit, N-terminal"/>
    <property type="match status" value="1"/>
</dbReference>
<dbReference type="HAMAP" id="MF_00530">
    <property type="entry name" value="ATP_synth_epsil_bac"/>
    <property type="match status" value="1"/>
</dbReference>
<dbReference type="InterPro" id="IPR001469">
    <property type="entry name" value="ATP_synth_F1_dsu/esu"/>
</dbReference>
<dbReference type="InterPro" id="IPR020546">
    <property type="entry name" value="ATP_synth_F1_dsu/esu_N"/>
</dbReference>
<dbReference type="InterPro" id="IPR036771">
    <property type="entry name" value="ATPsynth_dsu/esu_N"/>
</dbReference>
<dbReference type="NCBIfam" id="NF009985">
    <property type="entry name" value="PRK13451.1"/>
    <property type="match status" value="1"/>
</dbReference>
<dbReference type="PANTHER" id="PTHR13822">
    <property type="entry name" value="ATP SYNTHASE DELTA/EPSILON CHAIN"/>
    <property type="match status" value="1"/>
</dbReference>
<dbReference type="PANTHER" id="PTHR13822:SF10">
    <property type="entry name" value="ATP SYNTHASE EPSILON CHAIN, CHLOROPLASTIC"/>
    <property type="match status" value="1"/>
</dbReference>
<dbReference type="Pfam" id="PF02823">
    <property type="entry name" value="ATP-synt_DE_N"/>
    <property type="match status" value="1"/>
</dbReference>
<dbReference type="SUPFAM" id="SSF51344">
    <property type="entry name" value="Epsilon subunit of F1F0-ATP synthase N-terminal domain"/>
    <property type="match status" value="1"/>
</dbReference>